<proteinExistence type="inferred from homology"/>
<reference key="1">
    <citation type="journal article" date="2009" name="J. Bacteriol.">
        <title>Genome sequences of three Agrobacterium biovars help elucidate the evolution of multichromosome genomes in bacteria.</title>
        <authorList>
            <person name="Slater S.C."/>
            <person name="Goldman B.S."/>
            <person name="Goodner B."/>
            <person name="Setubal J.C."/>
            <person name="Farrand S.K."/>
            <person name="Nester E.W."/>
            <person name="Burr T.J."/>
            <person name="Banta L."/>
            <person name="Dickerman A.W."/>
            <person name="Paulsen I."/>
            <person name="Otten L."/>
            <person name="Suen G."/>
            <person name="Welch R."/>
            <person name="Almeida N.F."/>
            <person name="Arnold F."/>
            <person name="Burton O.T."/>
            <person name="Du Z."/>
            <person name="Ewing A."/>
            <person name="Godsy E."/>
            <person name="Heisel S."/>
            <person name="Houmiel K.L."/>
            <person name="Jhaveri J."/>
            <person name="Lu J."/>
            <person name="Miller N.M."/>
            <person name="Norton S."/>
            <person name="Chen Q."/>
            <person name="Phoolcharoen W."/>
            <person name="Ohlin V."/>
            <person name="Ondrusek D."/>
            <person name="Pride N."/>
            <person name="Stricklin S.L."/>
            <person name="Sun J."/>
            <person name="Wheeler C."/>
            <person name="Wilson L."/>
            <person name="Zhu H."/>
            <person name="Wood D.W."/>
        </authorList>
    </citation>
    <scope>NUCLEOTIDE SEQUENCE [LARGE SCALE GENOMIC DNA]</scope>
    <source>
        <strain>ATCC BAA-846 / DSM 112012 / S4</strain>
    </source>
</reference>
<dbReference type="EMBL" id="CP000633">
    <property type="protein sequence ID" value="ACM35526.1"/>
    <property type="molecule type" value="Genomic_DNA"/>
</dbReference>
<dbReference type="RefSeq" id="WP_015914951.1">
    <property type="nucleotide sequence ID" value="NC_011989.1"/>
</dbReference>
<dbReference type="SMR" id="B9JRQ0"/>
<dbReference type="STRING" id="311402.Avi_0744"/>
<dbReference type="GeneID" id="60681604"/>
<dbReference type="KEGG" id="avi:Avi_0744"/>
<dbReference type="eggNOG" id="COG2063">
    <property type="taxonomic scope" value="Bacteria"/>
</dbReference>
<dbReference type="HOGENOM" id="CLU_069313_1_2_5"/>
<dbReference type="Proteomes" id="UP000001596">
    <property type="component" value="Chromosome 1"/>
</dbReference>
<dbReference type="GO" id="GO:0009427">
    <property type="term" value="C:bacterial-type flagellum basal body, distal rod, L ring"/>
    <property type="evidence" value="ECO:0007669"/>
    <property type="project" value="InterPro"/>
</dbReference>
<dbReference type="GO" id="GO:0009279">
    <property type="term" value="C:cell outer membrane"/>
    <property type="evidence" value="ECO:0007669"/>
    <property type="project" value="UniProtKB-SubCell"/>
</dbReference>
<dbReference type="GO" id="GO:0003774">
    <property type="term" value="F:cytoskeletal motor activity"/>
    <property type="evidence" value="ECO:0007669"/>
    <property type="project" value="InterPro"/>
</dbReference>
<dbReference type="GO" id="GO:0071973">
    <property type="term" value="P:bacterial-type flagellum-dependent cell motility"/>
    <property type="evidence" value="ECO:0007669"/>
    <property type="project" value="InterPro"/>
</dbReference>
<dbReference type="HAMAP" id="MF_00415">
    <property type="entry name" value="FlgH"/>
    <property type="match status" value="1"/>
</dbReference>
<dbReference type="InterPro" id="IPR000527">
    <property type="entry name" value="Flag_Lring"/>
</dbReference>
<dbReference type="NCBIfam" id="NF001305">
    <property type="entry name" value="PRK00249.1-5"/>
    <property type="match status" value="1"/>
</dbReference>
<dbReference type="PANTHER" id="PTHR34933">
    <property type="entry name" value="FLAGELLAR L-RING PROTEIN"/>
    <property type="match status" value="1"/>
</dbReference>
<dbReference type="PANTHER" id="PTHR34933:SF1">
    <property type="entry name" value="FLAGELLAR L-RING PROTEIN"/>
    <property type="match status" value="1"/>
</dbReference>
<dbReference type="Pfam" id="PF02107">
    <property type="entry name" value="FlgH"/>
    <property type="match status" value="1"/>
</dbReference>
<dbReference type="PRINTS" id="PR01008">
    <property type="entry name" value="FLGLRINGFLGH"/>
</dbReference>
<dbReference type="PROSITE" id="PS51257">
    <property type="entry name" value="PROKAR_LIPOPROTEIN"/>
    <property type="match status" value="1"/>
</dbReference>
<keyword id="KW-0975">Bacterial flagellum</keyword>
<keyword id="KW-0998">Cell outer membrane</keyword>
<keyword id="KW-0449">Lipoprotein</keyword>
<keyword id="KW-0472">Membrane</keyword>
<keyword id="KW-0564">Palmitate</keyword>
<keyword id="KW-1185">Reference proteome</keyword>
<keyword id="KW-0732">Signal</keyword>
<name>FLGH_ALLAM</name>
<sequence>MIKRSAVVLMAVILTGCGNKTLEEVGNAPAMSPVGSGLRYNQAPQLASYPKQTKAVSNGYSLWNDSQAALFKDSRAINVGDLLTVNISIADKAKFKNDTSRSRKNSTSLTWSTVINLFGITPPDSSGDMSTDSNSSSDGKGSVDRSETLTLMVAAVVTSILENGNLLISGSQEVRVNHEVRILNVAGIVRPQDVDAKNTISYEKIAEARISYGGKGRLTEVQQPPVGQQVVDMFSPF</sequence>
<feature type="signal peptide" evidence="1">
    <location>
        <begin position="1"/>
        <end position="16"/>
    </location>
</feature>
<feature type="chain" id="PRO_1000134823" description="Flagellar L-ring protein">
    <location>
        <begin position="17"/>
        <end position="237"/>
    </location>
</feature>
<feature type="region of interest" description="Disordered" evidence="2">
    <location>
        <begin position="122"/>
        <end position="143"/>
    </location>
</feature>
<feature type="compositionally biased region" description="Low complexity" evidence="2">
    <location>
        <begin position="124"/>
        <end position="140"/>
    </location>
</feature>
<feature type="lipid moiety-binding region" description="N-palmitoyl cysteine" evidence="1">
    <location>
        <position position="17"/>
    </location>
</feature>
<feature type="lipid moiety-binding region" description="S-diacylglycerol cysteine" evidence="1">
    <location>
        <position position="17"/>
    </location>
</feature>
<gene>
    <name evidence="1" type="primary">flgH</name>
    <name type="ordered locus">Avi_0744</name>
</gene>
<protein>
    <recommendedName>
        <fullName evidence="1">Flagellar L-ring protein</fullName>
    </recommendedName>
    <alternativeName>
        <fullName evidence="1">Basal body L-ring protein</fullName>
    </alternativeName>
</protein>
<accession>B9JRQ0</accession>
<organism>
    <name type="scientific">Allorhizobium ampelinum (strain ATCC BAA-846 / DSM 112012 / S4)</name>
    <name type="common">Agrobacterium vitis (strain S4)</name>
    <dbReference type="NCBI Taxonomy" id="311402"/>
    <lineage>
        <taxon>Bacteria</taxon>
        <taxon>Pseudomonadati</taxon>
        <taxon>Pseudomonadota</taxon>
        <taxon>Alphaproteobacteria</taxon>
        <taxon>Hyphomicrobiales</taxon>
        <taxon>Rhizobiaceae</taxon>
        <taxon>Rhizobium/Agrobacterium group</taxon>
        <taxon>Allorhizobium</taxon>
        <taxon>Allorhizobium ampelinum</taxon>
    </lineage>
</organism>
<evidence type="ECO:0000255" key="1">
    <source>
        <dbReference type="HAMAP-Rule" id="MF_00415"/>
    </source>
</evidence>
<evidence type="ECO:0000256" key="2">
    <source>
        <dbReference type="SAM" id="MobiDB-lite"/>
    </source>
</evidence>
<comment type="function">
    <text evidence="1">Assembles around the rod to form the L-ring and probably protects the motor/basal body from shearing forces during rotation.</text>
</comment>
<comment type="subunit">
    <text evidence="1">The basal body constitutes a major portion of the flagellar organelle and consists of four rings (L,P,S, and M) mounted on a central rod.</text>
</comment>
<comment type="subcellular location">
    <subcellularLocation>
        <location evidence="1">Cell outer membrane</location>
        <topology evidence="1">Lipid-anchor</topology>
    </subcellularLocation>
    <subcellularLocation>
        <location evidence="1">Bacterial flagellum basal body</location>
    </subcellularLocation>
</comment>
<comment type="similarity">
    <text evidence="1">Belongs to the FlgH family.</text>
</comment>